<accession>P87130</accession>
<reference key="1">
    <citation type="journal article" date="2002" name="Nature">
        <title>The genome sequence of Schizosaccharomyces pombe.</title>
        <authorList>
            <person name="Wood V."/>
            <person name="Gwilliam R."/>
            <person name="Rajandream M.A."/>
            <person name="Lyne M.H."/>
            <person name="Lyne R."/>
            <person name="Stewart A."/>
            <person name="Sgouros J.G."/>
            <person name="Peat N."/>
            <person name="Hayles J."/>
            <person name="Baker S.G."/>
            <person name="Basham D."/>
            <person name="Bowman S."/>
            <person name="Brooks K."/>
            <person name="Brown D."/>
            <person name="Brown S."/>
            <person name="Chillingworth T."/>
            <person name="Churcher C.M."/>
            <person name="Collins M."/>
            <person name="Connor R."/>
            <person name="Cronin A."/>
            <person name="Davis P."/>
            <person name="Feltwell T."/>
            <person name="Fraser A."/>
            <person name="Gentles S."/>
            <person name="Goble A."/>
            <person name="Hamlin N."/>
            <person name="Harris D.E."/>
            <person name="Hidalgo J."/>
            <person name="Hodgson G."/>
            <person name="Holroyd S."/>
            <person name="Hornsby T."/>
            <person name="Howarth S."/>
            <person name="Huckle E.J."/>
            <person name="Hunt S."/>
            <person name="Jagels K."/>
            <person name="James K.D."/>
            <person name="Jones L."/>
            <person name="Jones M."/>
            <person name="Leather S."/>
            <person name="McDonald S."/>
            <person name="McLean J."/>
            <person name="Mooney P."/>
            <person name="Moule S."/>
            <person name="Mungall K.L."/>
            <person name="Murphy L.D."/>
            <person name="Niblett D."/>
            <person name="Odell C."/>
            <person name="Oliver K."/>
            <person name="O'Neil S."/>
            <person name="Pearson D."/>
            <person name="Quail M.A."/>
            <person name="Rabbinowitsch E."/>
            <person name="Rutherford K.M."/>
            <person name="Rutter S."/>
            <person name="Saunders D."/>
            <person name="Seeger K."/>
            <person name="Sharp S."/>
            <person name="Skelton J."/>
            <person name="Simmonds M.N."/>
            <person name="Squares R."/>
            <person name="Squares S."/>
            <person name="Stevens K."/>
            <person name="Taylor K."/>
            <person name="Taylor R.G."/>
            <person name="Tivey A."/>
            <person name="Walsh S.V."/>
            <person name="Warren T."/>
            <person name="Whitehead S."/>
            <person name="Woodward J.R."/>
            <person name="Volckaert G."/>
            <person name="Aert R."/>
            <person name="Robben J."/>
            <person name="Grymonprez B."/>
            <person name="Weltjens I."/>
            <person name="Vanstreels E."/>
            <person name="Rieger M."/>
            <person name="Schaefer M."/>
            <person name="Mueller-Auer S."/>
            <person name="Gabel C."/>
            <person name="Fuchs M."/>
            <person name="Duesterhoeft A."/>
            <person name="Fritzc C."/>
            <person name="Holzer E."/>
            <person name="Moestl D."/>
            <person name="Hilbert H."/>
            <person name="Borzym K."/>
            <person name="Langer I."/>
            <person name="Beck A."/>
            <person name="Lehrach H."/>
            <person name="Reinhardt R."/>
            <person name="Pohl T.M."/>
            <person name="Eger P."/>
            <person name="Zimmermann W."/>
            <person name="Wedler H."/>
            <person name="Wambutt R."/>
            <person name="Purnelle B."/>
            <person name="Goffeau A."/>
            <person name="Cadieu E."/>
            <person name="Dreano S."/>
            <person name="Gloux S."/>
            <person name="Lelaure V."/>
            <person name="Mottier S."/>
            <person name="Galibert F."/>
            <person name="Aves S.J."/>
            <person name="Xiang Z."/>
            <person name="Hunt C."/>
            <person name="Moore K."/>
            <person name="Hurst S.M."/>
            <person name="Lucas M."/>
            <person name="Rochet M."/>
            <person name="Gaillardin C."/>
            <person name="Tallada V.A."/>
            <person name="Garzon A."/>
            <person name="Thode G."/>
            <person name="Daga R.R."/>
            <person name="Cruzado L."/>
            <person name="Jimenez J."/>
            <person name="Sanchez M."/>
            <person name="del Rey F."/>
            <person name="Benito J."/>
            <person name="Dominguez A."/>
            <person name="Revuelta J.L."/>
            <person name="Moreno S."/>
            <person name="Armstrong J."/>
            <person name="Forsburg S.L."/>
            <person name="Cerutti L."/>
            <person name="Lowe T."/>
            <person name="McCombie W.R."/>
            <person name="Paulsen I."/>
            <person name="Potashkin J."/>
            <person name="Shpakovski G.V."/>
            <person name="Ussery D."/>
            <person name="Barrell B.G."/>
            <person name="Nurse P."/>
        </authorList>
    </citation>
    <scope>NUCLEOTIDE SEQUENCE [LARGE SCALE GENOMIC DNA]</scope>
    <source>
        <strain>972 / ATCC 24843</strain>
    </source>
</reference>
<evidence type="ECO:0000250" key="1"/>
<evidence type="ECO:0000250" key="2">
    <source>
        <dbReference type="UniProtKB" id="P39515"/>
    </source>
</evidence>
<evidence type="ECO:0000255" key="3"/>
<evidence type="ECO:0000305" key="4"/>
<sequence length="164" mass="16901">MASADHTRDPCPYVILNDFGAAFSMGTIGGAIWHSIKGWRNSPPGEKRISAIAAAKTRAPVLGGNFGVWGGLFSTFDCAVKGVRRKEDPWNAIIAGFFTGGALAVRGGWRATRNGAIGCACILAVFEGLGIALGRMNAEYNRPVAPVIPDAPASGSTSAAPAAV</sequence>
<keyword id="KW-1015">Disulfide bond</keyword>
<keyword id="KW-0472">Membrane</keyword>
<keyword id="KW-0496">Mitochondrion</keyword>
<keyword id="KW-0999">Mitochondrion inner membrane</keyword>
<keyword id="KW-0653">Protein transport</keyword>
<keyword id="KW-1185">Reference proteome</keyword>
<keyword id="KW-0811">Translocation</keyword>
<keyword id="KW-0812">Transmembrane</keyword>
<keyword id="KW-1133">Transmembrane helix</keyword>
<keyword id="KW-0813">Transport</keyword>
<feature type="chain" id="PRO_0000210295" description="Mitochondrial import inner membrane translocase subunit tim17">
    <location>
        <begin position="1"/>
        <end position="164"/>
    </location>
</feature>
<feature type="transmembrane region" description="Helical" evidence="3">
    <location>
        <begin position="13"/>
        <end position="33"/>
    </location>
</feature>
<feature type="transmembrane region" description="Helical" evidence="3">
    <location>
        <begin position="60"/>
        <end position="77"/>
    </location>
</feature>
<feature type="transmembrane region" description="Helical" evidence="3">
    <location>
        <begin position="89"/>
        <end position="109"/>
    </location>
</feature>
<feature type="transmembrane region" description="Helical" evidence="3">
    <location>
        <begin position="114"/>
        <end position="134"/>
    </location>
</feature>
<feature type="disulfide bond" evidence="2">
    <location>
        <begin position="11"/>
        <end position="78"/>
    </location>
</feature>
<gene>
    <name type="primary">tim17</name>
    <name type="ORF">SPAC3A12.16c</name>
</gene>
<comment type="function">
    <text evidence="1">Essential component of the TIM23 complex, a complex that mediates the translocation of transit peptide-containing proteins across the mitochondrial inner membrane.</text>
</comment>
<comment type="subunit">
    <text evidence="1">Component of the TIM23 complex, at least composed of tim23, tim17, tim50 and tim50. The complex interacts with the tim44 component of the PAM complex (By similarity).</text>
</comment>
<comment type="subcellular location">
    <subcellularLocation>
        <location evidence="1">Mitochondrion inner membrane</location>
        <topology evidence="1">Multi-pass membrane protein</topology>
    </subcellularLocation>
</comment>
<comment type="similarity">
    <text evidence="4">Belongs to the Tim17/Tim22/Tim23 family.</text>
</comment>
<name>TIM17_SCHPO</name>
<proteinExistence type="inferred from homology"/>
<protein>
    <recommendedName>
        <fullName>Mitochondrial import inner membrane translocase subunit tim17</fullName>
    </recommendedName>
    <alternativeName>
        <fullName>Mitochondrial protein import protein 2</fullName>
    </alternativeName>
</protein>
<dbReference type="EMBL" id="CU329670">
    <property type="protein sequence ID" value="CAB08744.1"/>
    <property type="molecule type" value="Genomic_DNA"/>
</dbReference>
<dbReference type="PIR" id="T38684">
    <property type="entry name" value="T38684"/>
</dbReference>
<dbReference type="RefSeq" id="NP_593342.1">
    <property type="nucleotide sequence ID" value="NM_001018774.2"/>
</dbReference>
<dbReference type="SMR" id="P87130"/>
<dbReference type="ComplexPortal" id="CPX-540">
    <property type="entry name" value="Mitochondrial inner membrane pre-sequence translocase complex"/>
</dbReference>
<dbReference type="FunCoup" id="P87130">
    <property type="interactions" value="144"/>
</dbReference>
<dbReference type="STRING" id="284812.P87130"/>
<dbReference type="PaxDb" id="4896-SPAC3A12.16c.1"/>
<dbReference type="EnsemblFungi" id="SPAC3A12.16c.1">
    <property type="protein sequence ID" value="SPAC3A12.16c.1:pep"/>
    <property type="gene ID" value="SPAC3A12.16c"/>
</dbReference>
<dbReference type="GeneID" id="2543163"/>
<dbReference type="KEGG" id="spo:2543163"/>
<dbReference type="PomBase" id="SPAC3A12.16c">
    <property type="gene designation" value="tim17"/>
</dbReference>
<dbReference type="VEuPathDB" id="FungiDB:SPAC3A12.16c"/>
<dbReference type="eggNOG" id="KOG1652">
    <property type="taxonomic scope" value="Eukaryota"/>
</dbReference>
<dbReference type="HOGENOM" id="CLU_087811_3_0_1"/>
<dbReference type="InParanoid" id="P87130"/>
<dbReference type="OMA" id="FDCTFQY"/>
<dbReference type="PhylomeDB" id="P87130"/>
<dbReference type="Reactome" id="R-SPO-1268020">
    <property type="pathway name" value="Mitochondrial protein import"/>
</dbReference>
<dbReference type="PRO" id="PR:P87130"/>
<dbReference type="Proteomes" id="UP000002485">
    <property type="component" value="Chromosome I"/>
</dbReference>
<dbReference type="GO" id="GO:0005739">
    <property type="term" value="C:mitochondrion"/>
    <property type="evidence" value="ECO:0007005"/>
    <property type="project" value="PomBase"/>
</dbReference>
<dbReference type="GO" id="GO:0005744">
    <property type="term" value="C:TIM23 mitochondrial import inner membrane translocase complex"/>
    <property type="evidence" value="ECO:0000318"/>
    <property type="project" value="GO_Central"/>
</dbReference>
<dbReference type="GO" id="GO:0016887">
    <property type="term" value="F:ATP hydrolysis activity"/>
    <property type="evidence" value="ECO:0000305"/>
    <property type="project" value="PomBase"/>
</dbReference>
<dbReference type="GO" id="GO:0015450">
    <property type="term" value="F:protein-transporting ATPase activity"/>
    <property type="evidence" value="ECO:0000250"/>
    <property type="project" value="PomBase"/>
</dbReference>
<dbReference type="GO" id="GO:0006886">
    <property type="term" value="P:intracellular protein transport"/>
    <property type="evidence" value="ECO:0000304"/>
    <property type="project" value="PomBase"/>
</dbReference>
<dbReference type="GO" id="GO:0030150">
    <property type="term" value="P:protein import into mitochondrial matrix"/>
    <property type="evidence" value="ECO:0000250"/>
    <property type="project" value="PomBase"/>
</dbReference>
<dbReference type="InterPro" id="IPR005678">
    <property type="entry name" value="Tim17"/>
</dbReference>
<dbReference type="NCBIfam" id="TIGR00980">
    <property type="entry name" value="3a0801so1tim17"/>
    <property type="match status" value="1"/>
</dbReference>
<dbReference type="PANTHER" id="PTHR10485:SF0">
    <property type="entry name" value="AT05822P-RELATED"/>
    <property type="match status" value="1"/>
</dbReference>
<dbReference type="PANTHER" id="PTHR10485">
    <property type="entry name" value="MITOCHONDRIAL IMPORT INNER MEMBRANE TRANSLOCASE SUBUNIT TIM-17"/>
    <property type="match status" value="1"/>
</dbReference>
<dbReference type="Pfam" id="PF02466">
    <property type="entry name" value="Tim17"/>
    <property type="match status" value="1"/>
</dbReference>
<organism>
    <name type="scientific">Schizosaccharomyces pombe (strain 972 / ATCC 24843)</name>
    <name type="common">Fission yeast</name>
    <dbReference type="NCBI Taxonomy" id="284812"/>
    <lineage>
        <taxon>Eukaryota</taxon>
        <taxon>Fungi</taxon>
        <taxon>Dikarya</taxon>
        <taxon>Ascomycota</taxon>
        <taxon>Taphrinomycotina</taxon>
        <taxon>Schizosaccharomycetes</taxon>
        <taxon>Schizosaccharomycetales</taxon>
        <taxon>Schizosaccharomycetaceae</taxon>
        <taxon>Schizosaccharomyces</taxon>
    </lineage>
</organism>